<gene>
    <name evidence="9" type="primary">thyB</name>
    <name type="ORF">DDB_G0289179</name>
</gene>
<accession>Q27564</accession>
<accession>Q54HT8</accession>
<evidence type="ECO:0000250" key="1"/>
<evidence type="ECO:0000255" key="2"/>
<evidence type="ECO:0000256" key="3">
    <source>
        <dbReference type="SAM" id="MobiDB-lite"/>
    </source>
</evidence>
<evidence type="ECO:0000269" key="4">
    <source>
    </source>
</evidence>
<evidence type="ECO:0000269" key="5">
    <source>
    </source>
</evidence>
<evidence type="ECO:0000269" key="6">
    <source>
    </source>
</evidence>
<evidence type="ECO:0000269" key="7">
    <source>
    </source>
</evidence>
<evidence type="ECO:0000305" key="8"/>
<evidence type="ECO:0000312" key="9">
    <source>
        <dbReference type="EMBL" id="AAB03673.1"/>
    </source>
</evidence>
<evidence type="ECO:0000312" key="10">
    <source>
        <dbReference type="EMBL" id="AAM44288.1"/>
    </source>
</evidence>
<evidence type="ECO:0000312" key="11">
    <source>
        <dbReference type="EMBL" id="AAO64434.1"/>
    </source>
</evidence>
<evidence type="ECO:0000312" key="12">
    <source>
        <dbReference type="EMBL" id="EAL62823.1"/>
    </source>
</evidence>
<sequence length="227" mass="25494">MIVTQIAGKIQVIFGPMFSGKTTELIRRIKRFNFANKKCLLIKYSKDTRYNDNIDKSFLVTHDKQNYQAFPCSILEDVKEQAQNYDVIGIDEGQFFPDVVQFSEDLANQGKTVIIAALDGTFQRKPFQSVIDLVSKAEYITKLTAVCMVCYNEAAFSKRIVESDDIELIGGIDKYISVCRGCYNSDQNEGNSTKPSKTARHSHSQSAPSVAPLAVNINPDDHLNNDY</sequence>
<comment type="catalytic activity">
    <reaction evidence="7">
        <text>thymidine + ATP = dTMP + ADP + H(+)</text>
        <dbReference type="Rhea" id="RHEA:19129"/>
        <dbReference type="ChEBI" id="CHEBI:15378"/>
        <dbReference type="ChEBI" id="CHEBI:17748"/>
        <dbReference type="ChEBI" id="CHEBI:30616"/>
        <dbReference type="ChEBI" id="CHEBI:63528"/>
        <dbReference type="ChEBI" id="CHEBI:456216"/>
        <dbReference type="EC" id="2.7.1.21"/>
    </reaction>
</comment>
<comment type="biophysicochemical properties">
    <kinetics>
        <KM evidence="7">5.1 uM for thymidine</KM>
    </kinetics>
</comment>
<comment type="subunit">
    <text evidence="6">Interacts with calmodulin in the presence of Ca(2+).</text>
</comment>
<comment type="developmental stage">
    <text evidence="4 5">Expression levels decrease throughout development.</text>
</comment>
<comment type="similarity">
    <text evidence="2">Belongs to the thymidine kinase family.</text>
</comment>
<feature type="chain" id="PRO_0000293627" description="Thymidine kinase 1">
    <location>
        <begin position="1"/>
        <end position="227"/>
    </location>
</feature>
<feature type="region of interest" description="Disordered" evidence="3">
    <location>
        <begin position="187"/>
        <end position="227"/>
    </location>
</feature>
<feature type="compositionally biased region" description="Polar residues" evidence="3">
    <location>
        <begin position="187"/>
        <end position="196"/>
    </location>
</feature>
<feature type="active site" description="Proton acceptor" evidence="2">
    <location>
        <position position="92"/>
    </location>
</feature>
<feature type="binding site" evidence="2 8">
    <location>
        <begin position="15"/>
        <end position="22"/>
    </location>
    <ligand>
        <name>ATP</name>
        <dbReference type="ChEBI" id="CHEBI:30616"/>
    </ligand>
</feature>
<feature type="binding site" evidence="1">
    <location>
        <begin position="47"/>
        <end position="49"/>
    </location>
    <ligand>
        <name>ATP</name>
        <dbReference type="ChEBI" id="CHEBI:30616"/>
    </ligand>
</feature>
<feature type="binding site" evidence="1">
    <location>
        <begin position="91"/>
        <end position="94"/>
    </location>
    <ligand>
        <name>ATP</name>
        <dbReference type="ChEBI" id="CHEBI:30616"/>
    </ligand>
</feature>
<feature type="binding site" evidence="1">
    <location>
        <position position="122"/>
    </location>
    <ligand>
        <name>substrate</name>
    </ligand>
</feature>
<feature type="binding site" evidence="1">
    <location>
        <position position="147"/>
    </location>
    <ligand>
        <name>Zn(2+)</name>
        <dbReference type="ChEBI" id="CHEBI:29105"/>
    </ligand>
</feature>
<feature type="binding site" evidence="1">
    <location>
        <position position="150"/>
    </location>
    <ligand>
        <name>Zn(2+)</name>
        <dbReference type="ChEBI" id="CHEBI:29105"/>
    </ligand>
</feature>
<feature type="binding site" evidence="1">
    <location>
        <begin position="166"/>
        <end position="170"/>
    </location>
    <ligand>
        <name>substrate</name>
    </ligand>
</feature>
<feature type="binding site" evidence="1">
    <location>
        <position position="175"/>
    </location>
    <ligand>
        <name>substrate</name>
    </ligand>
</feature>
<feature type="binding site" evidence="1">
    <location>
        <position position="179"/>
    </location>
    <ligand>
        <name>Zn(2+)</name>
        <dbReference type="ChEBI" id="CHEBI:29105"/>
    </ligand>
</feature>
<feature type="binding site" evidence="1">
    <location>
        <position position="182"/>
    </location>
    <ligand>
        <name>Zn(2+)</name>
        <dbReference type="ChEBI" id="CHEBI:29105"/>
    </ligand>
</feature>
<organism>
    <name type="scientific">Dictyostelium discoideum</name>
    <name type="common">Social amoeba</name>
    <dbReference type="NCBI Taxonomy" id="44689"/>
    <lineage>
        <taxon>Eukaryota</taxon>
        <taxon>Amoebozoa</taxon>
        <taxon>Evosea</taxon>
        <taxon>Eumycetozoa</taxon>
        <taxon>Dictyostelia</taxon>
        <taxon>Dictyosteliales</taxon>
        <taxon>Dictyosteliaceae</taxon>
        <taxon>Dictyostelium</taxon>
    </lineage>
</organism>
<keyword id="KW-0067">ATP-binding</keyword>
<keyword id="KW-0112">Calmodulin-binding</keyword>
<keyword id="KW-0237">DNA synthesis</keyword>
<keyword id="KW-0418">Kinase</keyword>
<keyword id="KW-0479">Metal-binding</keyword>
<keyword id="KW-0547">Nucleotide-binding</keyword>
<keyword id="KW-1185">Reference proteome</keyword>
<keyword id="KW-0808">Transferase</keyword>
<keyword id="KW-0862">Zinc</keyword>
<proteinExistence type="evidence at protein level"/>
<reference evidence="8 10" key="1">
    <citation type="journal article" date="2005" name="Biochem. Biophys. Res. Commun.">
        <title>Isolation and characterization of Dictyostelium thymidine kinase 1 as a calmodulin-binding protein.</title>
        <authorList>
            <person name="O'Day D.H."/>
            <person name="Chatterjee-Chakraborty M."/>
            <person name="Wagler S."/>
            <person name="Myre M.A."/>
        </authorList>
    </citation>
    <scope>NUCLEOTIDE SEQUENCE [MRNA]</scope>
    <scope>INTERACTION WITH CALMODULIN</scope>
</reference>
<reference evidence="8 11" key="2">
    <citation type="journal article" date="2007" name="J. Mol. Biol.">
        <title>Dictyostelium discoideum salvages purine deoxyribonucleosides by highly specific bacterial-like deoxyribonucleoside kinases.</title>
        <authorList>
            <person name="Sandrini M.P.B."/>
            <person name="Soederbom F."/>
            <person name="Mikkelsen N.E."/>
            <person name="Piskur J."/>
        </authorList>
    </citation>
    <scope>NUCLEOTIDE SEQUENCE [MRNA]</scope>
    <scope>CATALYTIC ACTIVITY</scope>
    <scope>BIOPHYSICOCHEMICAL PROPERTIES</scope>
    <source>
        <strain evidence="7">AX4</strain>
    </source>
</reference>
<reference key="3">
    <citation type="journal article" date="1996" name="Proc. Natl. Acad. Sci. U.S.A.">
        <title>Ordered yeast artificial chromosome clones representing the Dictyostelium discoideum genome.</title>
        <authorList>
            <person name="Kuspa A."/>
            <person name="Loomis W.F."/>
        </authorList>
    </citation>
    <scope>NUCLEOTIDE SEQUENCE [LARGE SCALE MRNA]</scope>
    <source>
        <strain>AX4</strain>
    </source>
</reference>
<reference evidence="8 12" key="4">
    <citation type="journal article" date="2005" name="Nature">
        <title>The genome of the social amoeba Dictyostelium discoideum.</title>
        <authorList>
            <person name="Eichinger L."/>
            <person name="Pachebat J.A."/>
            <person name="Gloeckner G."/>
            <person name="Rajandream M.A."/>
            <person name="Sucgang R."/>
            <person name="Berriman M."/>
            <person name="Song J."/>
            <person name="Olsen R."/>
            <person name="Szafranski K."/>
            <person name="Xu Q."/>
            <person name="Tunggal B."/>
            <person name="Kummerfeld S."/>
            <person name="Madera M."/>
            <person name="Konfortov B.A."/>
            <person name="Rivero F."/>
            <person name="Bankier A.T."/>
            <person name="Lehmann R."/>
            <person name="Hamlin N."/>
            <person name="Davies R."/>
            <person name="Gaudet P."/>
            <person name="Fey P."/>
            <person name="Pilcher K."/>
            <person name="Chen G."/>
            <person name="Saunders D."/>
            <person name="Sodergren E.J."/>
            <person name="Davis P."/>
            <person name="Kerhornou A."/>
            <person name="Nie X."/>
            <person name="Hall N."/>
            <person name="Anjard C."/>
            <person name="Hemphill L."/>
            <person name="Bason N."/>
            <person name="Farbrother P."/>
            <person name="Desany B."/>
            <person name="Just E."/>
            <person name="Morio T."/>
            <person name="Rost R."/>
            <person name="Churcher C.M."/>
            <person name="Cooper J."/>
            <person name="Haydock S."/>
            <person name="van Driessche N."/>
            <person name="Cronin A."/>
            <person name="Goodhead I."/>
            <person name="Muzny D.M."/>
            <person name="Mourier T."/>
            <person name="Pain A."/>
            <person name="Lu M."/>
            <person name="Harper D."/>
            <person name="Lindsay R."/>
            <person name="Hauser H."/>
            <person name="James K.D."/>
            <person name="Quiles M."/>
            <person name="Madan Babu M."/>
            <person name="Saito T."/>
            <person name="Buchrieser C."/>
            <person name="Wardroper A."/>
            <person name="Felder M."/>
            <person name="Thangavelu M."/>
            <person name="Johnson D."/>
            <person name="Knights A."/>
            <person name="Loulseged H."/>
            <person name="Mungall K.L."/>
            <person name="Oliver K."/>
            <person name="Price C."/>
            <person name="Quail M.A."/>
            <person name="Urushihara H."/>
            <person name="Hernandez J."/>
            <person name="Rabbinowitsch E."/>
            <person name="Steffen D."/>
            <person name="Sanders M."/>
            <person name="Ma J."/>
            <person name="Kohara Y."/>
            <person name="Sharp S."/>
            <person name="Simmonds M.N."/>
            <person name="Spiegler S."/>
            <person name="Tivey A."/>
            <person name="Sugano S."/>
            <person name="White B."/>
            <person name="Walker D."/>
            <person name="Woodward J.R."/>
            <person name="Winckler T."/>
            <person name="Tanaka Y."/>
            <person name="Shaulsky G."/>
            <person name="Schleicher M."/>
            <person name="Weinstock G.M."/>
            <person name="Rosenthal A."/>
            <person name="Cox E.C."/>
            <person name="Chisholm R.L."/>
            <person name="Gibbs R.A."/>
            <person name="Loomis W.F."/>
            <person name="Platzer M."/>
            <person name="Kay R.R."/>
            <person name="Williams J.G."/>
            <person name="Dear P.H."/>
            <person name="Noegel A.A."/>
            <person name="Barrell B.G."/>
            <person name="Kuspa A."/>
        </authorList>
    </citation>
    <scope>NUCLEOTIDE SEQUENCE [LARGE SCALE GENOMIC DNA]</scope>
    <source>
        <strain evidence="12">AX4</strain>
    </source>
</reference>
<reference evidence="8" key="5">
    <citation type="journal article" date="2002" name="Development">
        <title>A transcriptional profile of multicellular development in Dictyostelium discoideum.</title>
        <authorList>
            <person name="Van Driessche N."/>
            <person name="Shaw C."/>
            <person name="Katoh M."/>
            <person name="Morio T."/>
            <person name="Sucgang R."/>
            <person name="Ibarra M."/>
            <person name="Kuwayama H."/>
            <person name="Saito T."/>
            <person name="Urushihara H."/>
            <person name="Maeda M."/>
            <person name="Takeuchi I."/>
            <person name="Ochiai H."/>
            <person name="Eaton W."/>
            <person name="Tollett J."/>
            <person name="Halter J."/>
            <person name="Kuspa A."/>
            <person name="Tanaka Y."/>
            <person name="Shaulsky G."/>
        </authorList>
    </citation>
    <scope>DEVELOPMENTAL STAGE</scope>
</reference>
<reference evidence="8" key="6">
    <citation type="journal article" date="2003" name="Eukaryot. Cell">
        <title>Genome-wide expression analyses of gene regulation during early development of Dictyostelium discoideum.</title>
        <authorList>
            <person name="Iranfar N."/>
            <person name="Fuller D."/>
            <person name="Loomis W.F."/>
        </authorList>
    </citation>
    <scope>DEVELOPMENTAL STAGE</scope>
</reference>
<protein>
    <recommendedName>
        <fullName>Thymidine kinase 1</fullName>
        <shortName>TK1</shortName>
        <ecNumber>2.7.1.21</ecNumber>
    </recommendedName>
    <alternativeName>
        <fullName>Calmodulin-binding protein ThyB</fullName>
    </alternativeName>
</protein>
<dbReference type="EC" id="2.7.1.21"/>
<dbReference type="EMBL" id="AY192984">
    <property type="protein sequence ID" value="AAO64434.1"/>
    <property type="molecule type" value="mRNA"/>
</dbReference>
<dbReference type="EMBL" id="AF510846">
    <property type="protein sequence ID" value="AAM44288.1"/>
    <property type="molecule type" value="mRNA"/>
</dbReference>
<dbReference type="EMBL" id="U61990">
    <property type="protein sequence ID" value="AAB03673.1"/>
    <property type="molecule type" value="mRNA"/>
</dbReference>
<dbReference type="EMBL" id="AAFI02000131">
    <property type="protein sequence ID" value="EAL62823.1"/>
    <property type="molecule type" value="Genomic_DNA"/>
</dbReference>
<dbReference type="RefSeq" id="XP_636351.1">
    <property type="nucleotide sequence ID" value="XM_631259.1"/>
</dbReference>
<dbReference type="SMR" id="Q27564"/>
<dbReference type="FunCoup" id="Q27564">
    <property type="interactions" value="43"/>
</dbReference>
<dbReference type="MINT" id="Q27564"/>
<dbReference type="STRING" id="44689.Q27564"/>
<dbReference type="PaxDb" id="44689-DDB0191436"/>
<dbReference type="EnsemblProtists" id="EAL62823">
    <property type="protein sequence ID" value="EAL62823"/>
    <property type="gene ID" value="DDB_G0289179"/>
</dbReference>
<dbReference type="GeneID" id="8627024"/>
<dbReference type="KEGG" id="ddi:DDB_G0289179"/>
<dbReference type="dictyBase" id="DDB_G0289179">
    <property type="gene designation" value="thyB"/>
</dbReference>
<dbReference type="VEuPathDB" id="AmoebaDB:DDB_G0289179"/>
<dbReference type="eggNOG" id="KOG3125">
    <property type="taxonomic scope" value="Eukaryota"/>
</dbReference>
<dbReference type="HOGENOM" id="CLU_064400_3_1_1"/>
<dbReference type="InParanoid" id="Q27564"/>
<dbReference type="OMA" id="EAYEPRC"/>
<dbReference type="PhylomeDB" id="Q27564"/>
<dbReference type="BRENDA" id="2.7.1.21">
    <property type="organism ID" value="1939"/>
</dbReference>
<dbReference type="Reactome" id="R-DDI-73614">
    <property type="pathway name" value="Pyrimidine salvage"/>
</dbReference>
<dbReference type="SABIO-RK" id="Q27564"/>
<dbReference type="PRO" id="PR:Q27564"/>
<dbReference type="Proteomes" id="UP000002195">
    <property type="component" value="Chromosome 5"/>
</dbReference>
<dbReference type="GO" id="GO:0005524">
    <property type="term" value="F:ATP binding"/>
    <property type="evidence" value="ECO:0000305"/>
    <property type="project" value="dictyBase"/>
</dbReference>
<dbReference type="GO" id="GO:0004683">
    <property type="term" value="F:calcium/calmodulin-dependent protein kinase activity"/>
    <property type="evidence" value="ECO:0000314"/>
    <property type="project" value="dictyBase"/>
</dbReference>
<dbReference type="GO" id="GO:0005516">
    <property type="term" value="F:calmodulin binding"/>
    <property type="evidence" value="ECO:0000353"/>
    <property type="project" value="dictyBase"/>
</dbReference>
<dbReference type="GO" id="GO:0042802">
    <property type="term" value="F:identical protein binding"/>
    <property type="evidence" value="ECO:0000353"/>
    <property type="project" value="dictyBase"/>
</dbReference>
<dbReference type="GO" id="GO:0046872">
    <property type="term" value="F:metal ion binding"/>
    <property type="evidence" value="ECO:0007669"/>
    <property type="project" value="UniProtKB-KW"/>
</dbReference>
<dbReference type="GO" id="GO:0004797">
    <property type="term" value="F:thymidine kinase activity"/>
    <property type="evidence" value="ECO:0000314"/>
    <property type="project" value="dictyBase"/>
</dbReference>
<dbReference type="GO" id="GO:0071897">
    <property type="term" value="P:DNA biosynthetic process"/>
    <property type="evidence" value="ECO:0007669"/>
    <property type="project" value="UniProtKB-KW"/>
</dbReference>
<dbReference type="GO" id="GO:0006139">
    <property type="term" value="P:nucleobase-containing compound metabolic process"/>
    <property type="evidence" value="ECO:0000314"/>
    <property type="project" value="dictyBase"/>
</dbReference>
<dbReference type="GO" id="GO:0046104">
    <property type="term" value="P:thymidine metabolic process"/>
    <property type="evidence" value="ECO:0000318"/>
    <property type="project" value="GO_Central"/>
</dbReference>
<dbReference type="FunFam" id="3.30.60.20:FF:000028">
    <property type="entry name" value="Thymidine kinase"/>
    <property type="match status" value="1"/>
</dbReference>
<dbReference type="FunFam" id="3.40.50.300:FF:001270">
    <property type="entry name" value="Thymidine kinase"/>
    <property type="match status" value="1"/>
</dbReference>
<dbReference type="Gene3D" id="3.30.60.20">
    <property type="match status" value="1"/>
</dbReference>
<dbReference type="Gene3D" id="3.40.50.300">
    <property type="entry name" value="P-loop containing nucleotide triphosphate hydrolases"/>
    <property type="match status" value="1"/>
</dbReference>
<dbReference type="InterPro" id="IPR027417">
    <property type="entry name" value="P-loop_NTPase"/>
</dbReference>
<dbReference type="InterPro" id="IPR001267">
    <property type="entry name" value="Thymidine_kinase"/>
</dbReference>
<dbReference type="InterPro" id="IPR020633">
    <property type="entry name" value="Thymidine_kinase_CS"/>
</dbReference>
<dbReference type="PANTHER" id="PTHR11441">
    <property type="entry name" value="THYMIDINE KINASE"/>
    <property type="match status" value="1"/>
</dbReference>
<dbReference type="PANTHER" id="PTHR11441:SF0">
    <property type="entry name" value="THYMIDINE KINASE, CYTOSOLIC"/>
    <property type="match status" value="1"/>
</dbReference>
<dbReference type="Pfam" id="PF00265">
    <property type="entry name" value="TK"/>
    <property type="match status" value="1"/>
</dbReference>
<dbReference type="PIRSF" id="PIRSF035805">
    <property type="entry name" value="TK_cell"/>
    <property type="match status" value="1"/>
</dbReference>
<dbReference type="SUPFAM" id="SSF57716">
    <property type="entry name" value="Glucocorticoid receptor-like (DNA-binding domain)"/>
    <property type="match status" value="1"/>
</dbReference>
<dbReference type="SUPFAM" id="SSF52540">
    <property type="entry name" value="P-loop containing nucleoside triphosphate hydrolases"/>
    <property type="match status" value="1"/>
</dbReference>
<dbReference type="PROSITE" id="PS00603">
    <property type="entry name" value="TK_CELLULAR_TYPE"/>
    <property type="match status" value="1"/>
</dbReference>
<name>KITH_DICDI</name>